<protein>
    <recommendedName>
        <fullName evidence="1">DNA-directed RNA polymerase subunit beta</fullName>
        <shortName evidence="1">RNAP subunit beta</shortName>
        <ecNumber evidence="1">2.7.7.6</ecNumber>
    </recommendedName>
    <alternativeName>
        <fullName evidence="1">RNA polymerase subunit beta</fullName>
    </alternativeName>
    <alternativeName>
        <fullName evidence="1">Transcriptase subunit beta</fullName>
    </alternativeName>
</protein>
<evidence type="ECO:0000255" key="1">
    <source>
        <dbReference type="HAMAP-Rule" id="MF_01321"/>
    </source>
</evidence>
<reference key="1">
    <citation type="journal article" date="2005" name="Nat. Biotechnol.">
        <title>Complete genome sequence of the plant commensal Pseudomonas fluorescens Pf-5.</title>
        <authorList>
            <person name="Paulsen I.T."/>
            <person name="Press C.M."/>
            <person name="Ravel J."/>
            <person name="Kobayashi D.Y."/>
            <person name="Myers G.S.A."/>
            <person name="Mavrodi D.V."/>
            <person name="DeBoy R.T."/>
            <person name="Seshadri R."/>
            <person name="Ren Q."/>
            <person name="Madupu R."/>
            <person name="Dodson R.J."/>
            <person name="Durkin A.S."/>
            <person name="Brinkac L.M."/>
            <person name="Daugherty S.C."/>
            <person name="Sullivan S.A."/>
            <person name="Rosovitz M.J."/>
            <person name="Gwinn M.L."/>
            <person name="Zhou L."/>
            <person name="Schneider D.J."/>
            <person name="Cartinhour S.W."/>
            <person name="Nelson W.C."/>
            <person name="Weidman J."/>
            <person name="Watkins K."/>
            <person name="Tran K."/>
            <person name="Khouri H."/>
            <person name="Pierson E.A."/>
            <person name="Pierson L.S. III"/>
            <person name="Thomashow L.S."/>
            <person name="Loper J.E."/>
        </authorList>
    </citation>
    <scope>NUCLEOTIDE SEQUENCE [LARGE SCALE GENOMIC DNA]</scope>
    <source>
        <strain>ATCC BAA-477 / NRRL B-23932 / Pf-5</strain>
    </source>
</reference>
<gene>
    <name evidence="1" type="primary">rpoB</name>
    <name type="ordered locus">PFL_5589</name>
</gene>
<keyword id="KW-0240">DNA-directed RNA polymerase</keyword>
<keyword id="KW-0548">Nucleotidyltransferase</keyword>
<keyword id="KW-0804">Transcription</keyword>
<keyword id="KW-0808">Transferase</keyword>
<organism>
    <name type="scientific">Pseudomonas fluorescens (strain ATCC BAA-477 / NRRL B-23932 / Pf-5)</name>
    <dbReference type="NCBI Taxonomy" id="220664"/>
    <lineage>
        <taxon>Bacteria</taxon>
        <taxon>Pseudomonadati</taxon>
        <taxon>Pseudomonadota</taxon>
        <taxon>Gammaproteobacteria</taxon>
        <taxon>Pseudomonadales</taxon>
        <taxon>Pseudomonadaceae</taxon>
        <taxon>Pseudomonas</taxon>
    </lineage>
</organism>
<sequence length="1357" mass="150787">MAYSYTEKKRIRKDFSKLPDVMDVPYLLAIQLDSYREFLQAGATKDQFRDVGLHAAFKSVFPIISYSGNAALEYVGYRLGEPAFDVKECVLRGVTYAVPLRVKVRLIIFDKESSNKAIKDIKEQEVYMGEIPLMTENGTFVINGTERVIVSQLHRSPGVFFDHDRGKTHSSGKLLYSARIIPYRGSWLDFEFDPKDCVFVRIDRRRKLPASVLLRALGYTTEEVLDAFYTTNVFHVKGESLSLELVPQRLRGEIAVLDIQDDKGKVIVEQGRRITARHINQLEKAGIKELDVPLDYVLGRTTAKAIVHPATGEILAECNTELNTEILAKIAKAQVVRIETLYTNDIDCGPFVSDTLKIDSTSNQLEALVEIYRMMRPGEPPTKDAAETLFNNLFFSPERYDLSAVGRMKFNRRIGRTEIEGSGVLCKEDIVAVLKTLVDIRNGKGIVDDIDHLGNRRVRCVGEMAENQFRVGLVRVERAVKERLSMAESEGLMPQDLINAKPVAAAVKEFFGSSQLSQFMDQNNPLSEITHKRRVSALGPGGLTRERAGFEVRDVHPTHYGRVCPIETPEGPNIGLINSLAAYARTNQYGFLESPYRVVKDALVTDEIVFLSAIEEADHVIAQASATMNDKGQLVDELVAVRHLNEFTVKAPEDVTLMDVSPKQVVSVAASLIPFLEHDDANRALMGSNMQRQAVPTLRADKPLVGTGMERNVARDSGVCVVARRGGVIDSVDASRIVVRVADDEVETGEAGVDIYNLTKYTRSNQNTCINQRPLVSKGDRVQRSDIMADGPSTDMGELALGQNMRIAFMAWNGFNFEDSICLSERVVQEDRFTTIHIQELTCVARDTKLGPEEITADIPNVGEAALNKLDEAGIVYVGAEVGAGDILVGKVTPKGETQLTPEEKLLRAIFGEKASDVKDTSLRVPTGTKGTVIDVQVFTRDGVERDARALSIEKSQLDEIRKDLNEEFRIVEGATFERLRSALVGHKAEGGAGLKKGQEITDEVLDGLEHGQWFKLRMAEDALNEQLEKAQAYIVDRRRLLDDKFEDKKRKLQQGDDLAPGVLKIVKVYLAIRRRIQPGDKMAGRHGNKGVVSVIMPVEDMPHDANGTPVDVVLNPLGVPSRMNVGQILETHLGLAAKGLGEKINRMVEEQRKVAELRTFLDEIYNQIGGRNEDLDSFSDQEILDLANNLRGGVPMATPVFDGAKESEIKAMLKLADLPESGQMQLTDGRTGNKFERPVTVGYMYMLKLNHLVDDKMHARSTGSYSLVTQQPLGGKAQFGGQRFGEMEVWALEAYGAAYTLQEMLTVKSDDVNGRTKMYKNIVDGDHRMEPGMPESFNVLIKEIRSLGIDIDLETE</sequence>
<feature type="chain" id="PRO_0000224094" description="DNA-directed RNA polymerase subunit beta">
    <location>
        <begin position="1"/>
        <end position="1357"/>
    </location>
</feature>
<accession>Q4K526</accession>
<name>RPOB_PSEF5</name>
<proteinExistence type="inferred from homology"/>
<comment type="function">
    <text evidence="1">DNA-dependent RNA polymerase catalyzes the transcription of DNA into RNA using the four ribonucleoside triphosphates as substrates.</text>
</comment>
<comment type="catalytic activity">
    <reaction evidence="1">
        <text>RNA(n) + a ribonucleoside 5'-triphosphate = RNA(n+1) + diphosphate</text>
        <dbReference type="Rhea" id="RHEA:21248"/>
        <dbReference type="Rhea" id="RHEA-COMP:14527"/>
        <dbReference type="Rhea" id="RHEA-COMP:17342"/>
        <dbReference type="ChEBI" id="CHEBI:33019"/>
        <dbReference type="ChEBI" id="CHEBI:61557"/>
        <dbReference type="ChEBI" id="CHEBI:140395"/>
        <dbReference type="EC" id="2.7.7.6"/>
    </reaction>
</comment>
<comment type="subunit">
    <text evidence="1">The RNAP catalytic core consists of 2 alpha, 1 beta, 1 beta' and 1 omega subunit. When a sigma factor is associated with the core the holoenzyme is formed, which can initiate transcription.</text>
</comment>
<comment type="similarity">
    <text evidence="1">Belongs to the RNA polymerase beta chain family.</text>
</comment>
<dbReference type="EC" id="2.7.7.6" evidence="1"/>
<dbReference type="EMBL" id="CP000076">
    <property type="protein sequence ID" value="AAY94794.1"/>
    <property type="molecule type" value="Genomic_DNA"/>
</dbReference>
<dbReference type="RefSeq" id="WP_011063779.1">
    <property type="nucleotide sequence ID" value="NC_004129.6"/>
</dbReference>
<dbReference type="SMR" id="Q4K526"/>
<dbReference type="STRING" id="220664.PFL_5589"/>
<dbReference type="GeneID" id="57478538"/>
<dbReference type="KEGG" id="pfl:PFL_5589"/>
<dbReference type="PATRIC" id="fig|220664.5.peg.5708"/>
<dbReference type="eggNOG" id="COG0085">
    <property type="taxonomic scope" value="Bacteria"/>
</dbReference>
<dbReference type="HOGENOM" id="CLU_000524_4_0_6"/>
<dbReference type="Proteomes" id="UP000008540">
    <property type="component" value="Chromosome"/>
</dbReference>
<dbReference type="GO" id="GO:0000428">
    <property type="term" value="C:DNA-directed RNA polymerase complex"/>
    <property type="evidence" value="ECO:0007669"/>
    <property type="project" value="UniProtKB-KW"/>
</dbReference>
<dbReference type="GO" id="GO:0003677">
    <property type="term" value="F:DNA binding"/>
    <property type="evidence" value="ECO:0007669"/>
    <property type="project" value="UniProtKB-UniRule"/>
</dbReference>
<dbReference type="GO" id="GO:0003899">
    <property type="term" value="F:DNA-directed RNA polymerase activity"/>
    <property type="evidence" value="ECO:0007669"/>
    <property type="project" value="UniProtKB-UniRule"/>
</dbReference>
<dbReference type="GO" id="GO:0032549">
    <property type="term" value="F:ribonucleoside binding"/>
    <property type="evidence" value="ECO:0007669"/>
    <property type="project" value="InterPro"/>
</dbReference>
<dbReference type="GO" id="GO:0006351">
    <property type="term" value="P:DNA-templated transcription"/>
    <property type="evidence" value="ECO:0007669"/>
    <property type="project" value="UniProtKB-UniRule"/>
</dbReference>
<dbReference type="CDD" id="cd00653">
    <property type="entry name" value="RNA_pol_B_RPB2"/>
    <property type="match status" value="1"/>
</dbReference>
<dbReference type="FunFam" id="2.40.50.100:FF:000006">
    <property type="entry name" value="DNA-directed RNA polymerase subunit beta"/>
    <property type="match status" value="1"/>
</dbReference>
<dbReference type="FunFam" id="2.40.50.150:FF:000001">
    <property type="entry name" value="DNA-directed RNA polymerase subunit beta"/>
    <property type="match status" value="1"/>
</dbReference>
<dbReference type="FunFam" id="3.90.1110.10:FF:000001">
    <property type="entry name" value="DNA-directed RNA polymerase subunit beta"/>
    <property type="match status" value="1"/>
</dbReference>
<dbReference type="FunFam" id="3.90.1110.10:FF:000004">
    <property type="entry name" value="DNA-directed RNA polymerase subunit beta"/>
    <property type="match status" value="1"/>
</dbReference>
<dbReference type="FunFam" id="3.90.1800.10:FF:000001">
    <property type="entry name" value="DNA-directed RNA polymerase subunit beta"/>
    <property type="match status" value="1"/>
</dbReference>
<dbReference type="Gene3D" id="2.40.50.100">
    <property type="match status" value="1"/>
</dbReference>
<dbReference type="Gene3D" id="2.40.50.150">
    <property type="match status" value="1"/>
</dbReference>
<dbReference type="Gene3D" id="3.90.1100.10">
    <property type="match status" value="2"/>
</dbReference>
<dbReference type="Gene3D" id="6.10.140.1670">
    <property type="match status" value="1"/>
</dbReference>
<dbReference type="Gene3D" id="2.30.150.10">
    <property type="entry name" value="DNA-directed RNA polymerase, beta subunit, external 1 domain"/>
    <property type="match status" value="1"/>
</dbReference>
<dbReference type="Gene3D" id="2.40.270.10">
    <property type="entry name" value="DNA-directed RNA polymerase, subunit 2, domain 6"/>
    <property type="match status" value="2"/>
</dbReference>
<dbReference type="Gene3D" id="3.90.1800.10">
    <property type="entry name" value="RNA polymerase alpha subunit dimerisation domain"/>
    <property type="match status" value="1"/>
</dbReference>
<dbReference type="Gene3D" id="3.90.1110.10">
    <property type="entry name" value="RNA polymerase Rpb2, domain 2"/>
    <property type="match status" value="2"/>
</dbReference>
<dbReference type="HAMAP" id="MF_01321">
    <property type="entry name" value="RNApol_bact_RpoB"/>
    <property type="match status" value="1"/>
</dbReference>
<dbReference type="InterPro" id="IPR042107">
    <property type="entry name" value="DNA-dir_RNA_pol_bsu_ext_1_sf"/>
</dbReference>
<dbReference type="InterPro" id="IPR019462">
    <property type="entry name" value="DNA-dir_RNA_pol_bsu_external_1"/>
</dbReference>
<dbReference type="InterPro" id="IPR015712">
    <property type="entry name" value="DNA-dir_RNA_pol_su2"/>
</dbReference>
<dbReference type="InterPro" id="IPR007120">
    <property type="entry name" value="DNA-dir_RNAP_su2_dom"/>
</dbReference>
<dbReference type="InterPro" id="IPR037033">
    <property type="entry name" value="DNA-dir_RNAP_su2_hyb_sf"/>
</dbReference>
<dbReference type="InterPro" id="IPR010243">
    <property type="entry name" value="RNA_pol_bsu_bac"/>
</dbReference>
<dbReference type="InterPro" id="IPR007121">
    <property type="entry name" value="RNA_pol_bsu_CS"/>
</dbReference>
<dbReference type="InterPro" id="IPR007644">
    <property type="entry name" value="RNA_pol_bsu_protrusion"/>
</dbReference>
<dbReference type="InterPro" id="IPR007642">
    <property type="entry name" value="RNA_pol_Rpb2_2"/>
</dbReference>
<dbReference type="InterPro" id="IPR037034">
    <property type="entry name" value="RNA_pol_Rpb2_2_sf"/>
</dbReference>
<dbReference type="InterPro" id="IPR007645">
    <property type="entry name" value="RNA_pol_Rpb2_3"/>
</dbReference>
<dbReference type="InterPro" id="IPR007641">
    <property type="entry name" value="RNA_pol_Rpb2_7"/>
</dbReference>
<dbReference type="InterPro" id="IPR014724">
    <property type="entry name" value="RNA_pol_RPB2_OB-fold"/>
</dbReference>
<dbReference type="NCBIfam" id="NF001616">
    <property type="entry name" value="PRK00405.1"/>
    <property type="match status" value="1"/>
</dbReference>
<dbReference type="NCBIfam" id="TIGR02013">
    <property type="entry name" value="rpoB"/>
    <property type="match status" value="1"/>
</dbReference>
<dbReference type="PANTHER" id="PTHR20856">
    <property type="entry name" value="DNA-DIRECTED RNA POLYMERASE I SUBUNIT 2"/>
    <property type="match status" value="1"/>
</dbReference>
<dbReference type="Pfam" id="PF04563">
    <property type="entry name" value="RNA_pol_Rpb2_1"/>
    <property type="match status" value="1"/>
</dbReference>
<dbReference type="Pfam" id="PF04561">
    <property type="entry name" value="RNA_pol_Rpb2_2"/>
    <property type="match status" value="2"/>
</dbReference>
<dbReference type="Pfam" id="PF04565">
    <property type="entry name" value="RNA_pol_Rpb2_3"/>
    <property type="match status" value="1"/>
</dbReference>
<dbReference type="Pfam" id="PF10385">
    <property type="entry name" value="RNA_pol_Rpb2_45"/>
    <property type="match status" value="1"/>
</dbReference>
<dbReference type="Pfam" id="PF00562">
    <property type="entry name" value="RNA_pol_Rpb2_6"/>
    <property type="match status" value="1"/>
</dbReference>
<dbReference type="Pfam" id="PF04560">
    <property type="entry name" value="RNA_pol_Rpb2_7"/>
    <property type="match status" value="1"/>
</dbReference>
<dbReference type="SUPFAM" id="SSF64484">
    <property type="entry name" value="beta and beta-prime subunits of DNA dependent RNA-polymerase"/>
    <property type="match status" value="1"/>
</dbReference>
<dbReference type="PROSITE" id="PS01166">
    <property type="entry name" value="RNA_POL_BETA"/>
    <property type="match status" value="1"/>
</dbReference>